<feature type="chain" id="PRO_1000196085" description="Large ribosomal subunit protein bL34">
    <location>
        <begin position="1"/>
        <end position="44"/>
    </location>
</feature>
<sequence length="44" mass="5123">MKRTYQPSKIKRQRTHGFRARISTIGGKRVIAARRSKGRVRLTV</sequence>
<protein>
    <recommendedName>
        <fullName evidence="1">Large ribosomal subunit protein bL34</fullName>
    </recommendedName>
    <alternativeName>
        <fullName evidence="2">50S ribosomal protein L34</fullName>
    </alternativeName>
</protein>
<accession>B3QZF8</accession>
<name>RL34_PHYMT</name>
<evidence type="ECO:0000255" key="1">
    <source>
        <dbReference type="HAMAP-Rule" id="MF_00391"/>
    </source>
</evidence>
<evidence type="ECO:0000305" key="2"/>
<proteinExistence type="inferred from homology"/>
<gene>
    <name evidence="1" type="primary">rpmH</name>
    <name type="ordered locus">ATP_00378</name>
</gene>
<reference key="1">
    <citation type="journal article" date="2008" name="BMC Genomics">
        <title>The linear chromosome of the plant-pathogenic mycoplasma 'Candidatus Phytoplasma mali'.</title>
        <authorList>
            <person name="Kube M."/>
            <person name="Schneider B."/>
            <person name="Kuhl H."/>
            <person name="Dandekar T."/>
            <person name="Heitmann K."/>
            <person name="Migdoll A.M."/>
            <person name="Reinhardt R."/>
            <person name="Seemueller E."/>
        </authorList>
    </citation>
    <scope>NUCLEOTIDE SEQUENCE [LARGE SCALE GENOMIC DNA]</scope>
    <source>
        <strain>AT</strain>
    </source>
</reference>
<keyword id="KW-1185">Reference proteome</keyword>
<keyword id="KW-0687">Ribonucleoprotein</keyword>
<keyword id="KW-0689">Ribosomal protein</keyword>
<dbReference type="EMBL" id="CU469464">
    <property type="protein sequence ID" value="CAP18565.1"/>
    <property type="molecule type" value="Genomic_DNA"/>
</dbReference>
<dbReference type="SMR" id="B3QZF8"/>
<dbReference type="STRING" id="37692.ATP_00378"/>
<dbReference type="KEGG" id="pml:ATP_00378"/>
<dbReference type="eggNOG" id="COG0230">
    <property type="taxonomic scope" value="Bacteria"/>
</dbReference>
<dbReference type="HOGENOM" id="CLU_129938_2_0_14"/>
<dbReference type="Proteomes" id="UP000002020">
    <property type="component" value="Chromosome"/>
</dbReference>
<dbReference type="GO" id="GO:1990904">
    <property type="term" value="C:ribonucleoprotein complex"/>
    <property type="evidence" value="ECO:0007669"/>
    <property type="project" value="UniProtKB-KW"/>
</dbReference>
<dbReference type="GO" id="GO:0005840">
    <property type="term" value="C:ribosome"/>
    <property type="evidence" value="ECO:0007669"/>
    <property type="project" value="UniProtKB-KW"/>
</dbReference>
<dbReference type="GO" id="GO:0003735">
    <property type="term" value="F:structural constituent of ribosome"/>
    <property type="evidence" value="ECO:0007669"/>
    <property type="project" value="InterPro"/>
</dbReference>
<dbReference type="GO" id="GO:0006412">
    <property type="term" value="P:translation"/>
    <property type="evidence" value="ECO:0007669"/>
    <property type="project" value="UniProtKB-UniRule"/>
</dbReference>
<dbReference type="FunFam" id="1.10.287.3980:FF:000001">
    <property type="entry name" value="Mitochondrial ribosomal protein L34"/>
    <property type="match status" value="1"/>
</dbReference>
<dbReference type="Gene3D" id="1.10.287.3980">
    <property type="match status" value="1"/>
</dbReference>
<dbReference type="HAMAP" id="MF_00391">
    <property type="entry name" value="Ribosomal_bL34"/>
    <property type="match status" value="1"/>
</dbReference>
<dbReference type="InterPro" id="IPR000271">
    <property type="entry name" value="Ribosomal_bL34"/>
</dbReference>
<dbReference type="InterPro" id="IPR020939">
    <property type="entry name" value="Ribosomal_bL34_CS"/>
</dbReference>
<dbReference type="NCBIfam" id="TIGR01030">
    <property type="entry name" value="rpmH_bact"/>
    <property type="match status" value="1"/>
</dbReference>
<dbReference type="PANTHER" id="PTHR14503:SF4">
    <property type="entry name" value="LARGE RIBOSOMAL SUBUNIT PROTEIN BL34M"/>
    <property type="match status" value="1"/>
</dbReference>
<dbReference type="PANTHER" id="PTHR14503">
    <property type="entry name" value="MITOCHONDRIAL RIBOSOMAL PROTEIN 34 FAMILY MEMBER"/>
    <property type="match status" value="1"/>
</dbReference>
<dbReference type="Pfam" id="PF00468">
    <property type="entry name" value="Ribosomal_L34"/>
    <property type="match status" value="1"/>
</dbReference>
<dbReference type="PROSITE" id="PS00784">
    <property type="entry name" value="RIBOSOMAL_L34"/>
    <property type="match status" value="1"/>
</dbReference>
<organism>
    <name type="scientific">Phytoplasma mali (strain AT)</name>
    <dbReference type="NCBI Taxonomy" id="482235"/>
    <lineage>
        <taxon>Bacteria</taxon>
        <taxon>Bacillati</taxon>
        <taxon>Mycoplasmatota</taxon>
        <taxon>Mollicutes</taxon>
        <taxon>Acholeplasmatales</taxon>
        <taxon>Acholeplasmataceae</taxon>
        <taxon>Candidatus Phytoplasma</taxon>
        <taxon>16SrX (Apple proliferation group)</taxon>
    </lineage>
</organism>
<comment type="similarity">
    <text evidence="1">Belongs to the bacterial ribosomal protein bL34 family.</text>
</comment>